<gene>
    <name type="primary">SCA</name>
    <name type="synonym">LTP</name>
</gene>
<proteinExistence type="evidence at protein level"/>
<protein>
    <recommendedName>
        <fullName>Stigma/stylar cysteine-rich adhesin</fullName>
    </recommendedName>
    <alternativeName>
        <fullName>Lipid transfer protein</fullName>
    </alternativeName>
</protein>
<keyword id="KW-0903">Direct protein sequencing</keyword>
<keyword id="KW-1015">Disulfide bond</keyword>
<keyword id="KW-0446">Lipid-binding</keyword>
<keyword id="KW-0732">Signal</keyword>
<keyword id="KW-0813">Transport</keyword>
<sequence length="113" mass="11686">MARSSAVCFLLLLAFLIGTASAITCGQVDSDLTSCLGYARKGGVIPPGCCAGVRTLNNLAKTTPDRQTACNCLKSLVNPSLGLNAAIVAGIPGKCGVNIPYPIRMQTDCNKVR</sequence>
<comment type="function">
    <text>Acts as an adhesive agent between the pollen tube wall and the stylar transmitting tract epidermis. Binds a stylar pectin in a pH-dependent manner. Enhances activity of chemocyanin, a diffusible chemotropic factor.</text>
</comment>
<comment type="tissue specificity">
    <text evidence="2 3">Highly expressed in style and stigma, abundant in young leaves and petals, and low expression in young anthers at pollen mother cell stage with an active tapetum. Not expressed in mature leaves or in pollen grains or tubes. Found in the stylar transmitting tract epidermis and in the stylar extracellular matrix.</text>
</comment>
<comment type="developmental stage">
    <text evidence="3">Expressed throughout development of the stigma and style, and then decreases at 6 days after anthesis.</text>
</comment>
<comment type="similarity">
    <text evidence="4">Belongs to the plant LTP family.</text>
</comment>
<name>SCA_LILLO</name>
<accession>Q9SW93</accession>
<evidence type="ECO:0000250" key="1"/>
<evidence type="ECO:0000269" key="2">
    <source>
    </source>
</evidence>
<evidence type="ECO:0000269" key="3">
    <source>
    </source>
</evidence>
<evidence type="ECO:0000305" key="4"/>
<dbReference type="EMBL" id="AF171094">
    <property type="protein sequence ID" value="AAD46683.1"/>
    <property type="molecule type" value="mRNA"/>
</dbReference>
<dbReference type="SMR" id="Q9SW93"/>
<dbReference type="GO" id="GO:0008289">
    <property type="term" value="F:lipid binding"/>
    <property type="evidence" value="ECO:0007669"/>
    <property type="project" value="UniProtKB-KW"/>
</dbReference>
<dbReference type="GO" id="GO:0006869">
    <property type="term" value="P:lipid transport"/>
    <property type="evidence" value="ECO:0007669"/>
    <property type="project" value="InterPro"/>
</dbReference>
<dbReference type="CDD" id="cd01960">
    <property type="entry name" value="nsLTP1"/>
    <property type="match status" value="1"/>
</dbReference>
<dbReference type="FunFam" id="1.10.110.10:FF:000002">
    <property type="entry name" value="Non-specific lipid-transfer protein"/>
    <property type="match status" value="1"/>
</dbReference>
<dbReference type="Gene3D" id="1.10.110.10">
    <property type="entry name" value="Plant lipid-transfer and hydrophobic proteins"/>
    <property type="match status" value="1"/>
</dbReference>
<dbReference type="InterPro" id="IPR036312">
    <property type="entry name" value="Bifun_inhib/LTP/seed_sf"/>
</dbReference>
<dbReference type="InterPro" id="IPR016140">
    <property type="entry name" value="Bifunc_inhib/LTP/seed_store"/>
</dbReference>
<dbReference type="InterPro" id="IPR000528">
    <property type="entry name" value="Plant_nsLTP"/>
</dbReference>
<dbReference type="PANTHER" id="PTHR33076">
    <property type="entry name" value="NON-SPECIFIC LIPID-TRANSFER PROTEIN 2-RELATED"/>
    <property type="match status" value="1"/>
</dbReference>
<dbReference type="Pfam" id="PF00234">
    <property type="entry name" value="Tryp_alpha_amyl"/>
    <property type="match status" value="1"/>
</dbReference>
<dbReference type="PRINTS" id="PR00382">
    <property type="entry name" value="LIPIDTRNSFER"/>
</dbReference>
<dbReference type="SMART" id="SM00499">
    <property type="entry name" value="AAI"/>
    <property type="match status" value="1"/>
</dbReference>
<dbReference type="SUPFAM" id="SSF47699">
    <property type="entry name" value="Bifunctional inhibitor/lipid-transfer protein/seed storage 2S albumin"/>
    <property type="match status" value="1"/>
</dbReference>
<dbReference type="PROSITE" id="PS00597">
    <property type="entry name" value="PLANT_LTP"/>
    <property type="match status" value="1"/>
</dbReference>
<organism>
    <name type="scientific">Lilium longiflorum</name>
    <name type="common">Trumpet lily</name>
    <dbReference type="NCBI Taxonomy" id="4690"/>
    <lineage>
        <taxon>Eukaryota</taxon>
        <taxon>Viridiplantae</taxon>
        <taxon>Streptophyta</taxon>
        <taxon>Embryophyta</taxon>
        <taxon>Tracheophyta</taxon>
        <taxon>Spermatophyta</taxon>
        <taxon>Magnoliopsida</taxon>
        <taxon>Liliopsida</taxon>
        <taxon>Liliales</taxon>
        <taxon>Liliaceae</taxon>
        <taxon>Lilium</taxon>
    </lineage>
</organism>
<feature type="signal peptide" evidence="2">
    <location>
        <begin position="1"/>
        <end position="22"/>
    </location>
</feature>
<feature type="chain" id="PRO_0000018417" description="Stigma/stylar cysteine-rich adhesin">
    <location>
        <begin position="23"/>
        <end position="113"/>
    </location>
</feature>
<feature type="disulfide bond" evidence="1">
    <location>
        <begin position="25"/>
        <end position="72"/>
    </location>
</feature>
<feature type="disulfide bond" evidence="1">
    <location>
        <begin position="35"/>
        <end position="49"/>
    </location>
</feature>
<feature type="disulfide bond" evidence="1">
    <location>
        <begin position="50"/>
        <end position="95"/>
    </location>
</feature>
<feature type="disulfide bond" evidence="1">
    <location>
        <begin position="70"/>
        <end position="109"/>
    </location>
</feature>
<reference key="1">
    <citation type="journal article" date="2000" name="Plant Cell">
        <title>A lipid transfer-like protein is necessary for lily pollen tube adhesion to an in vitro stylar matrix.</title>
        <authorList>
            <person name="Park S.Y."/>
            <person name="Jauh G.Y."/>
            <person name="Mollet J.-C."/>
            <person name="Eckard K.J."/>
            <person name="Nothnagel E.A."/>
            <person name="Walling L.L."/>
            <person name="Lord E.M."/>
        </authorList>
    </citation>
    <scope>NUCLEOTIDE SEQUENCE [MRNA]</scope>
    <scope>PROTEIN SEQUENCE OF 23-57</scope>
    <scope>TISSUE SPECIFICITY</scope>
    <source>
        <strain>cv. Nellie white</strain>
    </source>
</reference>
<reference key="2">
    <citation type="journal article" date="2000" name="Plant Cell">
        <title>A lily stylar pectin is necessary for pollen tube adhesion to an in vitro stylar matrix.</title>
        <authorList>
            <person name="Mollet J.-C."/>
            <person name="Park S.Y."/>
            <person name="Nothnagel E.A."/>
            <person name="Lord E.M."/>
        </authorList>
    </citation>
    <scope>PECTIN BINDING</scope>
</reference>
<reference key="3">
    <citation type="journal article" date="2003" name="Plant Mol. Biol.">
        <title>Expression studies of SCA in lily and confirmation of its role in pollen tube adhesion.</title>
        <authorList>
            <person name="Park S.Y."/>
            <person name="Lord E.M."/>
        </authorList>
    </citation>
    <scope>TISSUE SPECIFICITY</scope>
    <scope>DEVELOPMENTAL STAGE</scope>
</reference>